<dbReference type="EMBL" id="D26185">
    <property type="protein sequence ID" value="BAA05206.1"/>
    <property type="molecule type" value="Genomic_DNA"/>
</dbReference>
<dbReference type="EMBL" id="AL009126">
    <property type="protein sequence ID" value="CAB16112.1"/>
    <property type="molecule type" value="Genomic_DNA"/>
</dbReference>
<dbReference type="PIR" id="S66000">
    <property type="entry name" value="S66000"/>
</dbReference>
<dbReference type="RefSeq" id="NP_391955.1">
    <property type="nucleotide sequence ID" value="NC_000964.3"/>
</dbReference>
<dbReference type="RefSeq" id="WP_003244448.1">
    <property type="nucleotide sequence ID" value="NZ_OZ025638.1"/>
</dbReference>
<dbReference type="SMR" id="P37507"/>
<dbReference type="FunCoup" id="P37507">
    <property type="interactions" value="34"/>
</dbReference>
<dbReference type="STRING" id="224308.BSU40750"/>
<dbReference type="PaxDb" id="224308-BSU40750"/>
<dbReference type="EnsemblBacteria" id="CAB16112">
    <property type="protein sequence ID" value="CAB16112"/>
    <property type="gene ID" value="BSU_40750"/>
</dbReference>
<dbReference type="GeneID" id="937883"/>
<dbReference type="KEGG" id="bsu:BSU40750"/>
<dbReference type="PATRIC" id="fig|224308.179.peg.4417"/>
<dbReference type="eggNOG" id="COG2315">
    <property type="taxonomic scope" value="Bacteria"/>
</dbReference>
<dbReference type="InParanoid" id="P37507"/>
<dbReference type="OrthoDB" id="9789813at2"/>
<dbReference type="PhylomeDB" id="P37507"/>
<dbReference type="BioCyc" id="BSUB:BSU40750-MONOMER"/>
<dbReference type="Proteomes" id="UP000001570">
    <property type="component" value="Chromosome"/>
</dbReference>
<dbReference type="Gene3D" id="3.90.1150.30">
    <property type="match status" value="1"/>
</dbReference>
<dbReference type="InterPro" id="IPR007351">
    <property type="entry name" value="YjbR"/>
</dbReference>
<dbReference type="InterPro" id="IPR038056">
    <property type="entry name" value="YjbR-like_sf"/>
</dbReference>
<dbReference type="PANTHER" id="PTHR35145:SF1">
    <property type="entry name" value="CYTOPLASMIC PROTEIN"/>
    <property type="match status" value="1"/>
</dbReference>
<dbReference type="PANTHER" id="PTHR35145">
    <property type="entry name" value="CYTOPLASMIC PROTEIN-RELATED"/>
    <property type="match status" value="1"/>
</dbReference>
<dbReference type="Pfam" id="PF04237">
    <property type="entry name" value="YjbR"/>
    <property type="match status" value="1"/>
</dbReference>
<dbReference type="SUPFAM" id="SSF142906">
    <property type="entry name" value="YjbR-like"/>
    <property type="match status" value="1"/>
</dbReference>
<accession>P37507</accession>
<gene>
    <name type="primary">yyaQ</name>
    <name type="ordered locus">BSU40750</name>
</gene>
<protein>
    <recommendedName>
        <fullName>Uncharacterized protein YyaQ</fullName>
    </recommendedName>
</protein>
<reference key="1">
    <citation type="journal article" date="1994" name="DNA Res.">
        <title>Systematic sequencing of the 180 kilobase region of the Bacillus subtilis chromosome containing the replication origin.</title>
        <authorList>
            <person name="Ogasawara N."/>
            <person name="Nakai S."/>
            <person name="Yoshikawa H."/>
        </authorList>
    </citation>
    <scope>NUCLEOTIDE SEQUENCE [GENOMIC DNA]</scope>
    <source>
        <strain>168</strain>
    </source>
</reference>
<reference key="2">
    <citation type="journal article" date="1997" name="Nature">
        <title>The complete genome sequence of the Gram-positive bacterium Bacillus subtilis.</title>
        <authorList>
            <person name="Kunst F."/>
            <person name="Ogasawara N."/>
            <person name="Moszer I."/>
            <person name="Albertini A.M."/>
            <person name="Alloni G."/>
            <person name="Azevedo V."/>
            <person name="Bertero M.G."/>
            <person name="Bessieres P."/>
            <person name="Bolotin A."/>
            <person name="Borchert S."/>
            <person name="Borriss R."/>
            <person name="Boursier L."/>
            <person name="Brans A."/>
            <person name="Braun M."/>
            <person name="Brignell S.C."/>
            <person name="Bron S."/>
            <person name="Brouillet S."/>
            <person name="Bruschi C.V."/>
            <person name="Caldwell B."/>
            <person name="Capuano V."/>
            <person name="Carter N.M."/>
            <person name="Choi S.-K."/>
            <person name="Codani J.-J."/>
            <person name="Connerton I.F."/>
            <person name="Cummings N.J."/>
            <person name="Daniel R.A."/>
            <person name="Denizot F."/>
            <person name="Devine K.M."/>
            <person name="Duesterhoeft A."/>
            <person name="Ehrlich S.D."/>
            <person name="Emmerson P.T."/>
            <person name="Entian K.-D."/>
            <person name="Errington J."/>
            <person name="Fabret C."/>
            <person name="Ferrari E."/>
            <person name="Foulger D."/>
            <person name="Fritz C."/>
            <person name="Fujita M."/>
            <person name="Fujita Y."/>
            <person name="Fuma S."/>
            <person name="Galizzi A."/>
            <person name="Galleron N."/>
            <person name="Ghim S.-Y."/>
            <person name="Glaser P."/>
            <person name="Goffeau A."/>
            <person name="Golightly E.J."/>
            <person name="Grandi G."/>
            <person name="Guiseppi G."/>
            <person name="Guy B.J."/>
            <person name="Haga K."/>
            <person name="Haiech J."/>
            <person name="Harwood C.R."/>
            <person name="Henaut A."/>
            <person name="Hilbert H."/>
            <person name="Holsappel S."/>
            <person name="Hosono S."/>
            <person name="Hullo M.-F."/>
            <person name="Itaya M."/>
            <person name="Jones L.-M."/>
            <person name="Joris B."/>
            <person name="Karamata D."/>
            <person name="Kasahara Y."/>
            <person name="Klaerr-Blanchard M."/>
            <person name="Klein C."/>
            <person name="Kobayashi Y."/>
            <person name="Koetter P."/>
            <person name="Koningstein G."/>
            <person name="Krogh S."/>
            <person name="Kumano M."/>
            <person name="Kurita K."/>
            <person name="Lapidus A."/>
            <person name="Lardinois S."/>
            <person name="Lauber J."/>
            <person name="Lazarevic V."/>
            <person name="Lee S.-M."/>
            <person name="Levine A."/>
            <person name="Liu H."/>
            <person name="Masuda S."/>
            <person name="Mauel C."/>
            <person name="Medigue C."/>
            <person name="Medina N."/>
            <person name="Mellado R.P."/>
            <person name="Mizuno M."/>
            <person name="Moestl D."/>
            <person name="Nakai S."/>
            <person name="Noback M."/>
            <person name="Noone D."/>
            <person name="O'Reilly M."/>
            <person name="Ogawa K."/>
            <person name="Ogiwara A."/>
            <person name="Oudega B."/>
            <person name="Park S.-H."/>
            <person name="Parro V."/>
            <person name="Pohl T.M."/>
            <person name="Portetelle D."/>
            <person name="Porwollik S."/>
            <person name="Prescott A.M."/>
            <person name="Presecan E."/>
            <person name="Pujic P."/>
            <person name="Purnelle B."/>
            <person name="Rapoport G."/>
            <person name="Rey M."/>
            <person name="Reynolds S."/>
            <person name="Rieger M."/>
            <person name="Rivolta C."/>
            <person name="Rocha E."/>
            <person name="Roche B."/>
            <person name="Rose M."/>
            <person name="Sadaie Y."/>
            <person name="Sato T."/>
            <person name="Scanlan E."/>
            <person name="Schleich S."/>
            <person name="Schroeter R."/>
            <person name="Scoffone F."/>
            <person name="Sekiguchi J."/>
            <person name="Sekowska A."/>
            <person name="Seror S.J."/>
            <person name="Serror P."/>
            <person name="Shin B.-S."/>
            <person name="Soldo B."/>
            <person name="Sorokin A."/>
            <person name="Tacconi E."/>
            <person name="Takagi T."/>
            <person name="Takahashi H."/>
            <person name="Takemaru K."/>
            <person name="Takeuchi M."/>
            <person name="Tamakoshi A."/>
            <person name="Tanaka T."/>
            <person name="Terpstra P."/>
            <person name="Tognoni A."/>
            <person name="Tosato V."/>
            <person name="Uchiyama S."/>
            <person name="Vandenbol M."/>
            <person name="Vannier F."/>
            <person name="Vassarotti A."/>
            <person name="Viari A."/>
            <person name="Wambutt R."/>
            <person name="Wedler E."/>
            <person name="Wedler H."/>
            <person name="Weitzenegger T."/>
            <person name="Winters P."/>
            <person name="Wipat A."/>
            <person name="Yamamoto H."/>
            <person name="Yamane K."/>
            <person name="Yasumoto K."/>
            <person name="Yata K."/>
            <person name="Yoshida K."/>
            <person name="Yoshikawa H.-F."/>
            <person name="Zumstein E."/>
            <person name="Yoshikawa H."/>
            <person name="Danchin A."/>
        </authorList>
    </citation>
    <scope>NUCLEOTIDE SEQUENCE [LARGE SCALE GENOMIC DNA]</scope>
    <source>
        <strain>168</strain>
    </source>
</reference>
<proteinExistence type="predicted"/>
<feature type="chain" id="PRO_0000050057" description="Uncharacterized protein YyaQ">
    <location>
        <begin position="1"/>
        <end position="118"/>
    </location>
</feature>
<organism>
    <name type="scientific">Bacillus subtilis (strain 168)</name>
    <dbReference type="NCBI Taxonomy" id="224308"/>
    <lineage>
        <taxon>Bacteria</taxon>
        <taxon>Bacillati</taxon>
        <taxon>Bacillota</taxon>
        <taxon>Bacilli</taxon>
        <taxon>Bacillales</taxon>
        <taxon>Bacillaceae</taxon>
        <taxon>Bacillus</taxon>
    </lineage>
</organism>
<name>YYAQ_BACSU</name>
<sequence>MLTREDIFKHVKEKYGTSPDYPWEKYPNYASLRHTSNKKWYGLIMNVLPEKLGLDGHGEIDILNLKCPPEISDRLRNGENILPGYHMDKEHWISIVLERTDPEGEIYNLIEQSFHLTK</sequence>
<keyword id="KW-1185">Reference proteome</keyword>